<proteinExistence type="inferred from homology"/>
<evidence type="ECO:0000255" key="1">
    <source>
        <dbReference type="HAMAP-Rule" id="MF_02002"/>
    </source>
</evidence>
<keyword id="KW-0030">Aminoacyl-tRNA synthetase</keyword>
<keyword id="KW-0067">ATP-binding</keyword>
<keyword id="KW-0963">Cytoplasm</keyword>
<keyword id="KW-0436">Ligase</keyword>
<keyword id="KW-0479">Metal-binding</keyword>
<keyword id="KW-0547">Nucleotide-binding</keyword>
<keyword id="KW-0648">Protein biosynthesis</keyword>
<keyword id="KW-1185">Reference proteome</keyword>
<keyword id="KW-0862">Zinc</keyword>
<gene>
    <name evidence="1" type="primary">ileS</name>
    <name type="ordered locus">MYPU_6670</name>
</gene>
<accession>Q98PQ2</accession>
<feature type="chain" id="PRO_0000098425" description="Isoleucine--tRNA ligase">
    <location>
        <begin position="1"/>
        <end position="888"/>
    </location>
</feature>
<feature type="short sequence motif" description="'HIGH' region">
    <location>
        <begin position="61"/>
        <end position="71"/>
    </location>
</feature>
<feature type="short sequence motif" description="'KMSKS' region">
    <location>
        <begin position="592"/>
        <end position="596"/>
    </location>
</feature>
<feature type="binding site" evidence="1">
    <location>
        <position position="551"/>
    </location>
    <ligand>
        <name>L-isoleucyl-5'-AMP</name>
        <dbReference type="ChEBI" id="CHEBI:178002"/>
    </ligand>
</feature>
<feature type="binding site" evidence="1">
    <location>
        <position position="595"/>
    </location>
    <ligand>
        <name>ATP</name>
        <dbReference type="ChEBI" id="CHEBI:30616"/>
    </ligand>
</feature>
<feature type="binding site" evidence="1">
    <location>
        <position position="862"/>
    </location>
    <ligand>
        <name>Zn(2+)</name>
        <dbReference type="ChEBI" id="CHEBI:29105"/>
    </ligand>
</feature>
<feature type="binding site" evidence="1">
    <location>
        <position position="865"/>
    </location>
    <ligand>
        <name>Zn(2+)</name>
        <dbReference type="ChEBI" id="CHEBI:29105"/>
    </ligand>
</feature>
<feature type="binding site" evidence="1">
    <location>
        <position position="879"/>
    </location>
    <ligand>
        <name>Zn(2+)</name>
        <dbReference type="ChEBI" id="CHEBI:29105"/>
    </ligand>
</feature>
<feature type="binding site" evidence="1">
    <location>
        <position position="882"/>
    </location>
    <ligand>
        <name>Zn(2+)</name>
        <dbReference type="ChEBI" id="CHEBI:29105"/>
    </ligand>
</feature>
<comment type="function">
    <text evidence="1">Catalyzes the attachment of isoleucine to tRNA(Ile). As IleRS can inadvertently accommodate and process structurally similar amino acids such as valine, to avoid such errors it has two additional distinct tRNA(Ile)-dependent editing activities. One activity is designated as 'pretransfer' editing and involves the hydrolysis of activated Val-AMP. The other activity is designated 'posttransfer' editing and involves deacylation of mischarged Val-tRNA(Ile).</text>
</comment>
<comment type="catalytic activity">
    <reaction evidence="1">
        <text>tRNA(Ile) + L-isoleucine + ATP = L-isoleucyl-tRNA(Ile) + AMP + diphosphate</text>
        <dbReference type="Rhea" id="RHEA:11060"/>
        <dbReference type="Rhea" id="RHEA-COMP:9666"/>
        <dbReference type="Rhea" id="RHEA-COMP:9695"/>
        <dbReference type="ChEBI" id="CHEBI:30616"/>
        <dbReference type="ChEBI" id="CHEBI:33019"/>
        <dbReference type="ChEBI" id="CHEBI:58045"/>
        <dbReference type="ChEBI" id="CHEBI:78442"/>
        <dbReference type="ChEBI" id="CHEBI:78528"/>
        <dbReference type="ChEBI" id="CHEBI:456215"/>
        <dbReference type="EC" id="6.1.1.5"/>
    </reaction>
</comment>
<comment type="cofactor">
    <cofactor evidence="1">
        <name>Zn(2+)</name>
        <dbReference type="ChEBI" id="CHEBI:29105"/>
    </cofactor>
    <text evidence="1">Binds 1 zinc ion per subunit.</text>
</comment>
<comment type="subunit">
    <text evidence="1">Monomer.</text>
</comment>
<comment type="subcellular location">
    <subcellularLocation>
        <location evidence="1">Cytoplasm</location>
    </subcellularLocation>
</comment>
<comment type="domain">
    <text evidence="1">IleRS has two distinct active sites: one for aminoacylation and one for editing. The misactivated valine is translocated from the active site to the editing site, which sterically excludes the correctly activated isoleucine. The single editing site contains two valyl binding pockets, one specific for each substrate (Val-AMP or Val-tRNA(Ile)).</text>
</comment>
<comment type="similarity">
    <text evidence="1">Belongs to the class-I aminoacyl-tRNA synthetase family. IleS type 1 subfamily.</text>
</comment>
<reference key="1">
    <citation type="journal article" date="2001" name="Nucleic Acids Res.">
        <title>The complete genome sequence of the murine respiratory pathogen Mycoplasma pulmonis.</title>
        <authorList>
            <person name="Chambaud I."/>
            <person name="Heilig R."/>
            <person name="Ferris S."/>
            <person name="Barbe V."/>
            <person name="Samson D."/>
            <person name="Galisson F."/>
            <person name="Moszer I."/>
            <person name="Dybvig K."/>
            <person name="Wroblewski H."/>
            <person name="Viari A."/>
            <person name="Rocha E.P.C."/>
            <person name="Blanchard A."/>
        </authorList>
    </citation>
    <scope>NUCLEOTIDE SEQUENCE [LARGE SCALE GENOMIC DNA]</scope>
    <source>
        <strain>UAB CTIP</strain>
    </source>
</reference>
<organism>
    <name type="scientific">Mycoplasmopsis pulmonis (strain UAB CTIP)</name>
    <name type="common">Mycoplasma pulmonis</name>
    <dbReference type="NCBI Taxonomy" id="272635"/>
    <lineage>
        <taxon>Bacteria</taxon>
        <taxon>Bacillati</taxon>
        <taxon>Mycoplasmatota</taxon>
        <taxon>Mycoplasmoidales</taxon>
        <taxon>Metamycoplasmataceae</taxon>
        <taxon>Mycoplasmopsis</taxon>
    </lineage>
</organism>
<dbReference type="EC" id="6.1.1.5" evidence="1"/>
<dbReference type="EMBL" id="AL445565">
    <property type="protein sequence ID" value="CAC13840.1"/>
    <property type="molecule type" value="Genomic_DNA"/>
</dbReference>
<dbReference type="PIR" id="C90595">
    <property type="entry name" value="C90595"/>
</dbReference>
<dbReference type="RefSeq" id="WP_010925468.1">
    <property type="nucleotide sequence ID" value="NC_002771.1"/>
</dbReference>
<dbReference type="SMR" id="Q98PQ2"/>
<dbReference type="STRING" id="272635.gene:17577275"/>
<dbReference type="KEGG" id="mpu:MYPU_6670"/>
<dbReference type="eggNOG" id="COG0060">
    <property type="taxonomic scope" value="Bacteria"/>
</dbReference>
<dbReference type="HOGENOM" id="CLU_001493_7_0_14"/>
<dbReference type="BioCyc" id="MPUL272635:G1GT6-677-MONOMER"/>
<dbReference type="Proteomes" id="UP000000528">
    <property type="component" value="Chromosome"/>
</dbReference>
<dbReference type="GO" id="GO:0005829">
    <property type="term" value="C:cytosol"/>
    <property type="evidence" value="ECO:0007669"/>
    <property type="project" value="TreeGrafter"/>
</dbReference>
<dbReference type="GO" id="GO:0002161">
    <property type="term" value="F:aminoacyl-tRNA deacylase activity"/>
    <property type="evidence" value="ECO:0007669"/>
    <property type="project" value="InterPro"/>
</dbReference>
<dbReference type="GO" id="GO:0005524">
    <property type="term" value="F:ATP binding"/>
    <property type="evidence" value="ECO:0007669"/>
    <property type="project" value="UniProtKB-UniRule"/>
</dbReference>
<dbReference type="GO" id="GO:0004822">
    <property type="term" value="F:isoleucine-tRNA ligase activity"/>
    <property type="evidence" value="ECO:0007669"/>
    <property type="project" value="UniProtKB-UniRule"/>
</dbReference>
<dbReference type="GO" id="GO:0000049">
    <property type="term" value="F:tRNA binding"/>
    <property type="evidence" value="ECO:0007669"/>
    <property type="project" value="InterPro"/>
</dbReference>
<dbReference type="GO" id="GO:0008270">
    <property type="term" value="F:zinc ion binding"/>
    <property type="evidence" value="ECO:0007669"/>
    <property type="project" value="UniProtKB-UniRule"/>
</dbReference>
<dbReference type="GO" id="GO:0006428">
    <property type="term" value="P:isoleucyl-tRNA aminoacylation"/>
    <property type="evidence" value="ECO:0007669"/>
    <property type="project" value="UniProtKB-UniRule"/>
</dbReference>
<dbReference type="CDD" id="cd07960">
    <property type="entry name" value="Anticodon_Ia_Ile_BEm"/>
    <property type="match status" value="1"/>
</dbReference>
<dbReference type="CDD" id="cd00818">
    <property type="entry name" value="IleRS_core"/>
    <property type="match status" value="1"/>
</dbReference>
<dbReference type="FunFam" id="3.40.50.620:FF:000152">
    <property type="entry name" value="Isoleucine--tRNA ligase"/>
    <property type="match status" value="1"/>
</dbReference>
<dbReference type="Gene3D" id="1.10.730.20">
    <property type="match status" value="1"/>
</dbReference>
<dbReference type="Gene3D" id="2.170.220.10">
    <property type="match status" value="1"/>
</dbReference>
<dbReference type="Gene3D" id="3.40.50.620">
    <property type="entry name" value="HUPs"/>
    <property type="match status" value="2"/>
</dbReference>
<dbReference type="Gene3D" id="1.10.10.830">
    <property type="entry name" value="Ile-tRNA synthetase CP2 domain-like"/>
    <property type="match status" value="1"/>
</dbReference>
<dbReference type="Gene3D" id="3.90.740.10">
    <property type="entry name" value="Valyl/Leucyl/Isoleucyl-tRNA synthetase, editing domain"/>
    <property type="match status" value="1"/>
</dbReference>
<dbReference type="HAMAP" id="MF_02002">
    <property type="entry name" value="Ile_tRNA_synth_type1"/>
    <property type="match status" value="1"/>
</dbReference>
<dbReference type="InterPro" id="IPR001412">
    <property type="entry name" value="aa-tRNA-synth_I_CS"/>
</dbReference>
<dbReference type="InterPro" id="IPR002300">
    <property type="entry name" value="aa-tRNA-synth_Ia"/>
</dbReference>
<dbReference type="InterPro" id="IPR033708">
    <property type="entry name" value="Anticodon_Ile_BEm"/>
</dbReference>
<dbReference type="InterPro" id="IPR002301">
    <property type="entry name" value="Ile-tRNA-ligase"/>
</dbReference>
<dbReference type="InterPro" id="IPR023585">
    <property type="entry name" value="Ile-tRNA-ligase_type1"/>
</dbReference>
<dbReference type="InterPro" id="IPR050081">
    <property type="entry name" value="Ile-tRNA_ligase"/>
</dbReference>
<dbReference type="InterPro" id="IPR013155">
    <property type="entry name" value="M/V/L/I-tRNA-synth_anticd-bd"/>
</dbReference>
<dbReference type="InterPro" id="IPR014729">
    <property type="entry name" value="Rossmann-like_a/b/a_fold"/>
</dbReference>
<dbReference type="InterPro" id="IPR009080">
    <property type="entry name" value="tRNAsynth_Ia_anticodon-bd"/>
</dbReference>
<dbReference type="InterPro" id="IPR009008">
    <property type="entry name" value="Val/Leu/Ile-tRNA-synth_edit"/>
</dbReference>
<dbReference type="InterPro" id="IPR010663">
    <property type="entry name" value="Znf_FPG/IleRS"/>
</dbReference>
<dbReference type="NCBIfam" id="TIGR00392">
    <property type="entry name" value="ileS"/>
    <property type="match status" value="1"/>
</dbReference>
<dbReference type="PANTHER" id="PTHR42765:SF1">
    <property type="entry name" value="ISOLEUCINE--TRNA LIGASE, MITOCHONDRIAL"/>
    <property type="match status" value="1"/>
</dbReference>
<dbReference type="PANTHER" id="PTHR42765">
    <property type="entry name" value="SOLEUCYL-TRNA SYNTHETASE"/>
    <property type="match status" value="1"/>
</dbReference>
<dbReference type="Pfam" id="PF08264">
    <property type="entry name" value="Anticodon_1"/>
    <property type="match status" value="1"/>
</dbReference>
<dbReference type="Pfam" id="PF00133">
    <property type="entry name" value="tRNA-synt_1"/>
    <property type="match status" value="1"/>
</dbReference>
<dbReference type="Pfam" id="PF06827">
    <property type="entry name" value="zf-FPG_IleRS"/>
    <property type="match status" value="1"/>
</dbReference>
<dbReference type="PRINTS" id="PR00984">
    <property type="entry name" value="TRNASYNTHILE"/>
</dbReference>
<dbReference type="SUPFAM" id="SSF47323">
    <property type="entry name" value="Anticodon-binding domain of a subclass of class I aminoacyl-tRNA synthetases"/>
    <property type="match status" value="1"/>
</dbReference>
<dbReference type="SUPFAM" id="SSF52374">
    <property type="entry name" value="Nucleotidylyl transferase"/>
    <property type="match status" value="1"/>
</dbReference>
<dbReference type="SUPFAM" id="SSF50677">
    <property type="entry name" value="ValRS/IleRS/LeuRS editing domain"/>
    <property type="match status" value="1"/>
</dbReference>
<dbReference type="PROSITE" id="PS00178">
    <property type="entry name" value="AA_TRNA_LIGASE_I"/>
    <property type="match status" value="1"/>
</dbReference>
<name>SYI_MYCPU</name>
<protein>
    <recommendedName>
        <fullName evidence="1">Isoleucine--tRNA ligase</fullName>
        <ecNumber evidence="1">6.1.1.5</ecNumber>
    </recommendedName>
    <alternativeName>
        <fullName evidence="1">Isoleucyl-tRNA synthetase</fullName>
        <shortName evidence="1">IleRS</shortName>
    </alternativeName>
</protein>
<sequence length="888" mass="103303">MNEKKDYKDTLNMPQTNFEMQAGLTRKEAQFRQRWLDNKLYHKILAKNKNNKQFVVHDGPPYANGSIHIGHALNKILKDIVVRFKSLQGFYSPFVPGWDTHGLPIENKMLSELKVNHKQIEVVKLRKEAAKYALNQMLIQKEQFLKLQMLSDFEEIYLTLDKNFEAKQLKLFKKMFFDGLIYKGLKPVYWSPSSMSALAEAEVEYYDHVSPSIYTCFTITKGNEFVEVDDELLIWTTTPWTLIANSGVAVGLDIEYSKVKFNKKNYIVASDLLEKVMEIFGVQKYKVVDTFKGKNLLGVEYQRPIKTDLFGIVVAGYHVSIDAGTGLVHMAPLFGEDDFIIGQENELDQIMHINDDGSINSEGDEFQGLFYSSANIKIKEFLEKNDKVMFFEYFTHSYPHDWRTKKPIIFRGTPQWFVSIDKIKPAILKEIEKIEGRPSWAVKRLATMIENRKTWTISRQRSWGVPIPIFYNEKNEIVNDEKVFDHVIELVEKYGSDVWFEKSVDELLPSEYKNKNWTKETNIMDVWFDSGSTSIGVEIEGVSVPFDLYLEGIDQYRGWFNSSIINSVAYWGQSPYRLLLSHGFVLDGKGKKMSKQLGNVVDPQEIIQKYGADILRLWVANCEYAHDVSVSESIIKQTVENYRKIRNTIKFLLGNLQDYDHSKFNLKLEGIHELINERLKKVKFDILQAYNDYDFNDVIKTLTNFLTDLSSFYLSISKDSLYADKINSKERRMIQYNMYNILEATLVVIAPIMPTTAEDAYDNFNKQDKQESVHLEKMFEATIADDKLEKTWKEFFDLKDEVYKEIEVEIANKKIKRTNDAHVTINTKSNFLMSLDLKKLLMIGKISFGSSLRVETFDSHKCPRCWNHIEKTEVVEDLCQRCYQTINS</sequence>